<accession>Q02XW0</accession>
<dbReference type="EC" id="1.2.1.41" evidence="1"/>
<dbReference type="EMBL" id="CP000425">
    <property type="protein sequence ID" value="ABJ73212.1"/>
    <property type="molecule type" value="Genomic_DNA"/>
</dbReference>
<dbReference type="RefSeq" id="WP_011676646.1">
    <property type="nucleotide sequence ID" value="NC_008527.1"/>
</dbReference>
<dbReference type="SMR" id="Q02XW0"/>
<dbReference type="KEGG" id="llc:LACR_1716"/>
<dbReference type="HOGENOM" id="CLU_030231_0_0_9"/>
<dbReference type="UniPathway" id="UPA00098">
    <property type="reaction ID" value="UER00360"/>
</dbReference>
<dbReference type="Proteomes" id="UP000000240">
    <property type="component" value="Chromosome"/>
</dbReference>
<dbReference type="GO" id="GO:0005737">
    <property type="term" value="C:cytoplasm"/>
    <property type="evidence" value="ECO:0007669"/>
    <property type="project" value="UniProtKB-SubCell"/>
</dbReference>
<dbReference type="GO" id="GO:0004350">
    <property type="term" value="F:glutamate-5-semialdehyde dehydrogenase activity"/>
    <property type="evidence" value="ECO:0007669"/>
    <property type="project" value="UniProtKB-UniRule"/>
</dbReference>
<dbReference type="GO" id="GO:0050661">
    <property type="term" value="F:NADP binding"/>
    <property type="evidence" value="ECO:0007669"/>
    <property type="project" value="InterPro"/>
</dbReference>
<dbReference type="GO" id="GO:0055129">
    <property type="term" value="P:L-proline biosynthetic process"/>
    <property type="evidence" value="ECO:0007669"/>
    <property type="project" value="UniProtKB-UniRule"/>
</dbReference>
<dbReference type="CDD" id="cd07079">
    <property type="entry name" value="ALDH_F18-19_ProA-GPR"/>
    <property type="match status" value="1"/>
</dbReference>
<dbReference type="FunFam" id="3.40.309.10:FF:000006">
    <property type="entry name" value="Gamma-glutamyl phosphate reductase"/>
    <property type="match status" value="1"/>
</dbReference>
<dbReference type="Gene3D" id="3.40.605.10">
    <property type="entry name" value="Aldehyde Dehydrogenase, Chain A, domain 1"/>
    <property type="match status" value="1"/>
</dbReference>
<dbReference type="Gene3D" id="3.40.309.10">
    <property type="entry name" value="Aldehyde Dehydrogenase, Chain A, domain 2"/>
    <property type="match status" value="1"/>
</dbReference>
<dbReference type="HAMAP" id="MF_00412">
    <property type="entry name" value="ProA"/>
    <property type="match status" value="1"/>
</dbReference>
<dbReference type="InterPro" id="IPR016161">
    <property type="entry name" value="Ald_DH/histidinol_DH"/>
</dbReference>
<dbReference type="InterPro" id="IPR016163">
    <property type="entry name" value="Ald_DH_C"/>
</dbReference>
<dbReference type="InterPro" id="IPR016162">
    <property type="entry name" value="Ald_DH_N"/>
</dbReference>
<dbReference type="InterPro" id="IPR015590">
    <property type="entry name" value="Aldehyde_DH_dom"/>
</dbReference>
<dbReference type="InterPro" id="IPR020593">
    <property type="entry name" value="G-glutamylP_reductase_CS"/>
</dbReference>
<dbReference type="InterPro" id="IPR012134">
    <property type="entry name" value="Glu-5-SA_DH"/>
</dbReference>
<dbReference type="InterPro" id="IPR000965">
    <property type="entry name" value="GPR_dom"/>
</dbReference>
<dbReference type="NCBIfam" id="NF001221">
    <property type="entry name" value="PRK00197.1"/>
    <property type="match status" value="1"/>
</dbReference>
<dbReference type="NCBIfam" id="TIGR00407">
    <property type="entry name" value="proA"/>
    <property type="match status" value="1"/>
</dbReference>
<dbReference type="PANTHER" id="PTHR11063:SF8">
    <property type="entry name" value="DELTA-1-PYRROLINE-5-CARBOXYLATE SYNTHASE"/>
    <property type="match status" value="1"/>
</dbReference>
<dbReference type="PANTHER" id="PTHR11063">
    <property type="entry name" value="GLUTAMATE SEMIALDEHYDE DEHYDROGENASE"/>
    <property type="match status" value="1"/>
</dbReference>
<dbReference type="Pfam" id="PF00171">
    <property type="entry name" value="Aldedh"/>
    <property type="match status" value="2"/>
</dbReference>
<dbReference type="PIRSF" id="PIRSF000151">
    <property type="entry name" value="GPR"/>
    <property type="match status" value="1"/>
</dbReference>
<dbReference type="SUPFAM" id="SSF53720">
    <property type="entry name" value="ALDH-like"/>
    <property type="match status" value="1"/>
</dbReference>
<dbReference type="PROSITE" id="PS01223">
    <property type="entry name" value="PROA"/>
    <property type="match status" value="1"/>
</dbReference>
<protein>
    <recommendedName>
        <fullName evidence="1">Gamma-glutamyl phosphate reductase</fullName>
        <shortName evidence="1">GPR</shortName>
        <ecNumber evidence="1">1.2.1.41</ecNumber>
    </recommendedName>
    <alternativeName>
        <fullName evidence="1">Glutamate-5-semialdehyde dehydrogenase</fullName>
    </alternativeName>
    <alternativeName>
        <fullName evidence="1">Glutamyl-gamma-semialdehyde dehydrogenase</fullName>
        <shortName evidence="1">GSA dehydrogenase</shortName>
    </alternativeName>
</protein>
<keyword id="KW-0028">Amino-acid biosynthesis</keyword>
<keyword id="KW-0963">Cytoplasm</keyword>
<keyword id="KW-0521">NADP</keyword>
<keyword id="KW-0560">Oxidoreductase</keyword>
<keyword id="KW-0641">Proline biosynthesis</keyword>
<organism>
    <name type="scientific">Lactococcus lactis subsp. cremoris (strain SK11)</name>
    <dbReference type="NCBI Taxonomy" id="272622"/>
    <lineage>
        <taxon>Bacteria</taxon>
        <taxon>Bacillati</taxon>
        <taxon>Bacillota</taxon>
        <taxon>Bacilli</taxon>
        <taxon>Lactobacillales</taxon>
        <taxon>Streptococcaceae</taxon>
        <taxon>Lactococcus</taxon>
        <taxon>Lactococcus cremoris subsp. cremoris</taxon>
    </lineage>
</organism>
<sequence>MIEELGLKVKTASKEAAKLSTAEKNTFLQKLADSLVENTDRIISENAKDLAKAKGHGISEIMVDRLRLTAQRISDMATGLRQVAELPDPIGQVLQGFTNLDGLKIVQKRVPLGTVGMIFESRPNVTIDAFSLCFKTGNSVLLRGGSDAIYSNMVLVEIIKENLLSAKITDGVVELLSDTSHAEAEKMMQADKFLDVLIPRGSARLINRVKEKATVPVIETGVGNCTIFVDESADLDMATRIVINAKTQRPSVCNAAESLVVHAKIADEFLPKLQNEINKVHEVEFRADERSLKALSAGIPATDEDFGMEFLYYILSVKTVDNLDEAIEHINTYSSRHSESIVTHDYFNAQKFQDEIDAAAVYVNASTRFTDGFVFGLGAEIGISTQKLHARGPMGLEALTSTKYLIDGCGQIR</sequence>
<gene>
    <name evidence="1" type="primary">proA</name>
    <name type="ordered locus">LACR_1716</name>
</gene>
<reference key="1">
    <citation type="journal article" date="2006" name="Proc. Natl. Acad. Sci. U.S.A.">
        <title>Comparative genomics of the lactic acid bacteria.</title>
        <authorList>
            <person name="Makarova K.S."/>
            <person name="Slesarev A."/>
            <person name="Wolf Y.I."/>
            <person name="Sorokin A."/>
            <person name="Mirkin B."/>
            <person name="Koonin E.V."/>
            <person name="Pavlov A."/>
            <person name="Pavlova N."/>
            <person name="Karamychev V."/>
            <person name="Polouchine N."/>
            <person name="Shakhova V."/>
            <person name="Grigoriev I."/>
            <person name="Lou Y."/>
            <person name="Rohksar D."/>
            <person name="Lucas S."/>
            <person name="Huang K."/>
            <person name="Goodstein D.M."/>
            <person name="Hawkins T."/>
            <person name="Plengvidhya V."/>
            <person name="Welker D."/>
            <person name="Hughes J."/>
            <person name="Goh Y."/>
            <person name="Benson A."/>
            <person name="Baldwin K."/>
            <person name="Lee J.-H."/>
            <person name="Diaz-Muniz I."/>
            <person name="Dosti B."/>
            <person name="Smeianov V."/>
            <person name="Wechter W."/>
            <person name="Barabote R."/>
            <person name="Lorca G."/>
            <person name="Altermann E."/>
            <person name="Barrangou R."/>
            <person name="Ganesan B."/>
            <person name="Xie Y."/>
            <person name="Rawsthorne H."/>
            <person name="Tamir D."/>
            <person name="Parker C."/>
            <person name="Breidt F."/>
            <person name="Broadbent J.R."/>
            <person name="Hutkins R."/>
            <person name="O'Sullivan D."/>
            <person name="Steele J."/>
            <person name="Unlu G."/>
            <person name="Saier M.H. Jr."/>
            <person name="Klaenhammer T."/>
            <person name="Richardson P."/>
            <person name="Kozyavkin S."/>
            <person name="Weimer B.C."/>
            <person name="Mills D.A."/>
        </authorList>
    </citation>
    <scope>NUCLEOTIDE SEQUENCE [LARGE SCALE GENOMIC DNA]</scope>
    <source>
        <strain>SK11</strain>
    </source>
</reference>
<evidence type="ECO:0000255" key="1">
    <source>
        <dbReference type="HAMAP-Rule" id="MF_00412"/>
    </source>
</evidence>
<proteinExistence type="inferred from homology"/>
<comment type="function">
    <text evidence="1">Catalyzes the NADPH-dependent reduction of L-glutamate 5-phosphate into L-glutamate 5-semialdehyde and phosphate. The product spontaneously undergoes cyclization to form 1-pyrroline-5-carboxylate.</text>
</comment>
<comment type="catalytic activity">
    <reaction evidence="1">
        <text>L-glutamate 5-semialdehyde + phosphate + NADP(+) = L-glutamyl 5-phosphate + NADPH + H(+)</text>
        <dbReference type="Rhea" id="RHEA:19541"/>
        <dbReference type="ChEBI" id="CHEBI:15378"/>
        <dbReference type="ChEBI" id="CHEBI:43474"/>
        <dbReference type="ChEBI" id="CHEBI:57783"/>
        <dbReference type="ChEBI" id="CHEBI:58066"/>
        <dbReference type="ChEBI" id="CHEBI:58274"/>
        <dbReference type="ChEBI" id="CHEBI:58349"/>
        <dbReference type="EC" id="1.2.1.41"/>
    </reaction>
</comment>
<comment type="pathway">
    <text evidence="1">Amino-acid biosynthesis; L-proline biosynthesis; L-glutamate 5-semialdehyde from L-glutamate: step 2/2.</text>
</comment>
<comment type="subcellular location">
    <subcellularLocation>
        <location evidence="1">Cytoplasm</location>
    </subcellularLocation>
</comment>
<comment type="similarity">
    <text evidence="1">Belongs to the gamma-glutamyl phosphate reductase family.</text>
</comment>
<feature type="chain" id="PRO_1000049957" description="Gamma-glutamyl phosphate reductase">
    <location>
        <begin position="1"/>
        <end position="413"/>
    </location>
</feature>
<name>PROA_LACLS</name>